<dbReference type="EC" id="2.1.3.2" evidence="1"/>
<dbReference type="EMBL" id="CP001014">
    <property type="protein sequence ID" value="ACB38982.1"/>
    <property type="molecule type" value="Genomic_DNA"/>
</dbReference>
<dbReference type="RefSeq" id="WP_012349404.1">
    <property type="nucleotide sequence ID" value="NC_010525.1"/>
</dbReference>
<dbReference type="SMR" id="B1Y9R0"/>
<dbReference type="STRING" id="444157.Tneu_0024"/>
<dbReference type="GeneID" id="6166284"/>
<dbReference type="KEGG" id="tne:Tneu_0024"/>
<dbReference type="eggNOG" id="arCOG00911">
    <property type="taxonomic scope" value="Archaea"/>
</dbReference>
<dbReference type="HOGENOM" id="CLU_043846_1_2_2"/>
<dbReference type="OrthoDB" id="7792at2157"/>
<dbReference type="UniPathway" id="UPA00070">
    <property type="reaction ID" value="UER00116"/>
</dbReference>
<dbReference type="Proteomes" id="UP000001694">
    <property type="component" value="Chromosome"/>
</dbReference>
<dbReference type="GO" id="GO:0016597">
    <property type="term" value="F:amino acid binding"/>
    <property type="evidence" value="ECO:0007669"/>
    <property type="project" value="InterPro"/>
</dbReference>
<dbReference type="GO" id="GO:0004070">
    <property type="term" value="F:aspartate carbamoyltransferase activity"/>
    <property type="evidence" value="ECO:0007669"/>
    <property type="project" value="UniProtKB-UniRule"/>
</dbReference>
<dbReference type="GO" id="GO:0006207">
    <property type="term" value="P:'de novo' pyrimidine nucleobase biosynthetic process"/>
    <property type="evidence" value="ECO:0007669"/>
    <property type="project" value="InterPro"/>
</dbReference>
<dbReference type="GO" id="GO:0044205">
    <property type="term" value="P:'de novo' UMP biosynthetic process"/>
    <property type="evidence" value="ECO:0007669"/>
    <property type="project" value="UniProtKB-UniRule"/>
</dbReference>
<dbReference type="GO" id="GO:0006520">
    <property type="term" value="P:amino acid metabolic process"/>
    <property type="evidence" value="ECO:0007669"/>
    <property type="project" value="InterPro"/>
</dbReference>
<dbReference type="FunFam" id="3.40.50.1370:FF:000001">
    <property type="entry name" value="Aspartate carbamoyltransferase"/>
    <property type="match status" value="1"/>
</dbReference>
<dbReference type="FunFam" id="3.40.50.1370:FF:000002">
    <property type="entry name" value="Aspartate carbamoyltransferase 2"/>
    <property type="match status" value="1"/>
</dbReference>
<dbReference type="Gene3D" id="3.40.50.1370">
    <property type="entry name" value="Aspartate/ornithine carbamoyltransferase"/>
    <property type="match status" value="2"/>
</dbReference>
<dbReference type="HAMAP" id="MF_00001">
    <property type="entry name" value="Asp_carb_tr"/>
    <property type="match status" value="1"/>
</dbReference>
<dbReference type="InterPro" id="IPR006132">
    <property type="entry name" value="Asp/Orn_carbamoyltranf_P-bd"/>
</dbReference>
<dbReference type="InterPro" id="IPR006130">
    <property type="entry name" value="Asp/Orn_carbamoylTrfase"/>
</dbReference>
<dbReference type="InterPro" id="IPR036901">
    <property type="entry name" value="Asp/Orn_carbamoylTrfase_sf"/>
</dbReference>
<dbReference type="InterPro" id="IPR002082">
    <property type="entry name" value="Asp_carbamoyltransf"/>
</dbReference>
<dbReference type="InterPro" id="IPR006131">
    <property type="entry name" value="Asp_carbamoyltransf_Asp/Orn-bd"/>
</dbReference>
<dbReference type="NCBIfam" id="TIGR00670">
    <property type="entry name" value="asp_carb_tr"/>
    <property type="match status" value="1"/>
</dbReference>
<dbReference type="NCBIfam" id="NF002032">
    <property type="entry name" value="PRK00856.1"/>
    <property type="match status" value="1"/>
</dbReference>
<dbReference type="PANTHER" id="PTHR45753:SF6">
    <property type="entry name" value="ASPARTATE CARBAMOYLTRANSFERASE"/>
    <property type="match status" value="1"/>
</dbReference>
<dbReference type="PANTHER" id="PTHR45753">
    <property type="entry name" value="ORNITHINE CARBAMOYLTRANSFERASE, MITOCHONDRIAL"/>
    <property type="match status" value="1"/>
</dbReference>
<dbReference type="Pfam" id="PF00185">
    <property type="entry name" value="OTCace"/>
    <property type="match status" value="1"/>
</dbReference>
<dbReference type="Pfam" id="PF02729">
    <property type="entry name" value="OTCace_N"/>
    <property type="match status" value="1"/>
</dbReference>
<dbReference type="PRINTS" id="PR00100">
    <property type="entry name" value="AOTCASE"/>
</dbReference>
<dbReference type="PRINTS" id="PR00101">
    <property type="entry name" value="ATCASE"/>
</dbReference>
<dbReference type="SUPFAM" id="SSF53671">
    <property type="entry name" value="Aspartate/ornithine carbamoyltransferase"/>
    <property type="match status" value="1"/>
</dbReference>
<dbReference type="PROSITE" id="PS00097">
    <property type="entry name" value="CARBAMOYLTRANSFERASE"/>
    <property type="match status" value="1"/>
</dbReference>
<accession>B1Y9R0</accession>
<feature type="chain" id="PRO_1000088811" description="Aspartate carbamoyltransferase catalytic subunit">
    <location>
        <begin position="1"/>
        <end position="304"/>
    </location>
</feature>
<feature type="binding site" evidence="1">
    <location>
        <position position="54"/>
    </location>
    <ligand>
        <name>carbamoyl phosphate</name>
        <dbReference type="ChEBI" id="CHEBI:58228"/>
    </ligand>
</feature>
<feature type="binding site" evidence="1">
    <location>
        <position position="55"/>
    </location>
    <ligand>
        <name>carbamoyl phosphate</name>
        <dbReference type="ChEBI" id="CHEBI:58228"/>
    </ligand>
</feature>
<feature type="binding site" evidence="1">
    <location>
        <position position="83"/>
    </location>
    <ligand>
        <name>L-aspartate</name>
        <dbReference type="ChEBI" id="CHEBI:29991"/>
    </ligand>
</feature>
<feature type="binding site" evidence="1">
    <location>
        <position position="104"/>
    </location>
    <ligand>
        <name>carbamoyl phosphate</name>
        <dbReference type="ChEBI" id="CHEBI:58228"/>
    </ligand>
</feature>
<feature type="binding site" evidence="1">
    <location>
        <position position="132"/>
    </location>
    <ligand>
        <name>carbamoyl phosphate</name>
        <dbReference type="ChEBI" id="CHEBI:58228"/>
    </ligand>
</feature>
<feature type="binding site" evidence="1">
    <location>
        <position position="135"/>
    </location>
    <ligand>
        <name>carbamoyl phosphate</name>
        <dbReference type="ChEBI" id="CHEBI:58228"/>
    </ligand>
</feature>
<feature type="binding site" evidence="1">
    <location>
        <position position="165"/>
    </location>
    <ligand>
        <name>L-aspartate</name>
        <dbReference type="ChEBI" id="CHEBI:29991"/>
    </ligand>
</feature>
<feature type="binding site" evidence="1">
    <location>
        <position position="226"/>
    </location>
    <ligand>
        <name>L-aspartate</name>
        <dbReference type="ChEBI" id="CHEBI:29991"/>
    </ligand>
</feature>
<feature type="binding site" evidence="1">
    <location>
        <position position="265"/>
    </location>
    <ligand>
        <name>carbamoyl phosphate</name>
        <dbReference type="ChEBI" id="CHEBI:58228"/>
    </ligand>
</feature>
<feature type="binding site" evidence="1">
    <location>
        <position position="266"/>
    </location>
    <ligand>
        <name>carbamoyl phosphate</name>
        <dbReference type="ChEBI" id="CHEBI:58228"/>
    </ligand>
</feature>
<gene>
    <name evidence="1" type="primary">pyrB</name>
    <name type="ordered locus">Tneu_0024</name>
</gene>
<organism>
    <name type="scientific">Pyrobaculum neutrophilum (strain DSM 2338 / JCM 9278 / NBRC 100436 / V24Sta)</name>
    <name type="common">Thermoproteus neutrophilus</name>
    <dbReference type="NCBI Taxonomy" id="444157"/>
    <lineage>
        <taxon>Archaea</taxon>
        <taxon>Thermoproteota</taxon>
        <taxon>Thermoprotei</taxon>
        <taxon>Thermoproteales</taxon>
        <taxon>Thermoproteaceae</taxon>
        <taxon>Pyrobaculum</taxon>
    </lineage>
</organism>
<comment type="function">
    <text evidence="1">Catalyzes the condensation of carbamoyl phosphate and aspartate to form carbamoyl aspartate and inorganic phosphate, the committed step in the de novo pyrimidine nucleotide biosynthesis pathway.</text>
</comment>
<comment type="catalytic activity">
    <reaction evidence="1">
        <text>carbamoyl phosphate + L-aspartate = N-carbamoyl-L-aspartate + phosphate + H(+)</text>
        <dbReference type="Rhea" id="RHEA:20013"/>
        <dbReference type="ChEBI" id="CHEBI:15378"/>
        <dbReference type="ChEBI" id="CHEBI:29991"/>
        <dbReference type="ChEBI" id="CHEBI:32814"/>
        <dbReference type="ChEBI" id="CHEBI:43474"/>
        <dbReference type="ChEBI" id="CHEBI:58228"/>
        <dbReference type="EC" id="2.1.3.2"/>
    </reaction>
</comment>
<comment type="pathway">
    <text evidence="1">Pyrimidine metabolism; UMP biosynthesis via de novo pathway; (S)-dihydroorotate from bicarbonate: step 2/3.</text>
</comment>
<comment type="subunit">
    <text evidence="1">Heterooligomer of catalytic and regulatory chains.</text>
</comment>
<comment type="similarity">
    <text evidence="1">Belongs to the aspartate/ornithine carbamoyltransferase superfamily. ATCase family.</text>
</comment>
<keyword id="KW-0665">Pyrimidine biosynthesis</keyword>
<keyword id="KW-0808">Transferase</keyword>
<reference key="1">
    <citation type="submission" date="2008-03" db="EMBL/GenBank/DDBJ databases">
        <title>Complete sequence of Thermoproteus neutrophilus V24Sta.</title>
        <authorList>
            <consortium name="US DOE Joint Genome Institute"/>
            <person name="Copeland A."/>
            <person name="Lucas S."/>
            <person name="Lapidus A."/>
            <person name="Glavina del Rio T."/>
            <person name="Dalin E."/>
            <person name="Tice H."/>
            <person name="Bruce D."/>
            <person name="Goodwin L."/>
            <person name="Pitluck S."/>
            <person name="Sims D."/>
            <person name="Brettin T."/>
            <person name="Detter J.C."/>
            <person name="Han C."/>
            <person name="Kuske C.R."/>
            <person name="Schmutz J."/>
            <person name="Larimer F."/>
            <person name="Land M."/>
            <person name="Hauser L."/>
            <person name="Kyrpides N."/>
            <person name="Mikhailova N."/>
            <person name="Biddle J.F."/>
            <person name="Zhang Z."/>
            <person name="Fitz-Gibbon S.T."/>
            <person name="Lowe T.M."/>
            <person name="Saltikov C."/>
            <person name="House C.H."/>
            <person name="Richardson P."/>
        </authorList>
    </citation>
    <scope>NUCLEOTIDE SEQUENCE [LARGE SCALE GENOMIC DNA]</scope>
    <source>
        <strain>DSM 2338 / JCM 9278 / NBRC 100436 / V24Sta</strain>
    </source>
</reference>
<proteinExistence type="inferred from homology"/>
<name>PYRB_PYRNV</name>
<protein>
    <recommendedName>
        <fullName evidence="1">Aspartate carbamoyltransferase catalytic subunit</fullName>
        <ecNumber evidence="1">2.1.3.2</ecNumber>
    </recommendedName>
    <alternativeName>
        <fullName evidence="1">Aspartate transcarbamylase</fullName>
        <shortName evidence="1">ATCase</shortName>
    </alternativeName>
</protein>
<evidence type="ECO:0000255" key="1">
    <source>
        <dbReference type="HAMAP-Rule" id="MF_00001"/>
    </source>
</evidence>
<sequence length="304" mass="35034">MWRGRDVISARDFGRRDLEELFETARYMEKYSKSRLEFLRGRVMAVAFFEPSTRTRLSFEVAMRRLGGDVIGFWGAEGTSVEKGETLVDTVKMLDAYSDVIVVRHRYEGASKLAAEVAESPVINGGDGAFNHPTQAMLDVYTMWREFGTVDGLNVGLIGDLRHARTVNSLLETLTNFRVRVYLISPEYLRPRVETIDYVQSRGLKLSFHTNVEEVIHELDVLYVVRIQKERFIDPLEYEKVKGSYRITVDMLKNARRHLIILHPLPRVDEIDHRVDATPHARYFRQAALGVPLRMALLYLILQS</sequence>